<dbReference type="EMBL" id="U81552">
    <property type="protein sequence ID" value="AAB39940.1"/>
    <property type="molecule type" value="Genomic_DNA"/>
</dbReference>
<dbReference type="EMBL" id="FJ423446">
    <property type="protein sequence ID" value="ACJ50116.1"/>
    <property type="molecule type" value="Genomic_DNA"/>
</dbReference>
<dbReference type="EMBL" id="FJ436964">
    <property type="protein sequence ID" value="ACK37291.1"/>
    <property type="molecule type" value="Genomic_DNA"/>
</dbReference>
<dbReference type="EMBL" id="FJ436965">
    <property type="protein sequence ID" value="ACK37293.1"/>
    <property type="molecule type" value="Genomic_DNA"/>
</dbReference>
<dbReference type="EMBL" id="BK000554">
    <property type="protein sequence ID" value="DAA00928.1"/>
    <property type="molecule type" value="Genomic_DNA"/>
</dbReference>
<dbReference type="PIR" id="T08028">
    <property type="entry name" value="T08028"/>
</dbReference>
<dbReference type="RefSeq" id="NP_958383.1">
    <property type="nucleotide sequence ID" value="NC_005353.1"/>
</dbReference>
<dbReference type="PDB" id="6KAC">
    <property type="method" value="EM"/>
    <property type="resolution" value="2.70 A"/>
    <property type="chains" value="Z/z=1-62"/>
</dbReference>
<dbReference type="PDB" id="6KAD">
    <property type="method" value="EM"/>
    <property type="resolution" value="3.40 A"/>
    <property type="chains" value="Z/z=1-62"/>
</dbReference>
<dbReference type="PDB" id="6KAF">
    <property type="method" value="EM"/>
    <property type="resolution" value="3.73 A"/>
    <property type="chains" value="Z/z=1-62"/>
</dbReference>
<dbReference type="PDB" id="8KDE">
    <property type="method" value="EM"/>
    <property type="resolution" value="2.60 A"/>
    <property type="chains" value="Z=1-62"/>
</dbReference>
<dbReference type="PDB" id="8ZEE">
    <property type="method" value="EM"/>
    <property type="resolution" value="2.90 A"/>
    <property type="chains" value="Z=1-62"/>
</dbReference>
<dbReference type="PDBsum" id="6KAC"/>
<dbReference type="PDBsum" id="6KAD"/>
<dbReference type="PDBsum" id="6KAF"/>
<dbReference type="PDBsum" id="8KDE"/>
<dbReference type="PDBsum" id="8ZEE"/>
<dbReference type="EMDB" id="EMD-37133"/>
<dbReference type="EMDB" id="EMD-60026"/>
<dbReference type="EMDB" id="EMD-9955"/>
<dbReference type="EMDB" id="EMD-9956"/>
<dbReference type="EMDB" id="EMD-9957"/>
<dbReference type="SMR" id="P92276"/>
<dbReference type="FunCoup" id="P92276">
    <property type="interactions" value="41"/>
</dbReference>
<dbReference type="STRING" id="3055.P92276"/>
<dbReference type="PaxDb" id="3055-DAA00928"/>
<dbReference type="GeneID" id="2716976"/>
<dbReference type="KEGG" id="cre:ChreCp027"/>
<dbReference type="eggNOG" id="ENOG502S7KE">
    <property type="taxonomic scope" value="Eukaryota"/>
</dbReference>
<dbReference type="HOGENOM" id="CLU_195286_0_0_1"/>
<dbReference type="InParanoid" id="P92276"/>
<dbReference type="BioCyc" id="CHLAMY:CHRECP027-MONOMER"/>
<dbReference type="BioCyc" id="MetaCyc:CHRECP027-MONOMER"/>
<dbReference type="Proteomes" id="UP000006906">
    <property type="component" value="Chloroplast"/>
</dbReference>
<dbReference type="GO" id="GO:0009535">
    <property type="term" value="C:chloroplast thylakoid membrane"/>
    <property type="evidence" value="ECO:0007669"/>
    <property type="project" value="UniProtKB-SubCell"/>
</dbReference>
<dbReference type="GO" id="GO:0009539">
    <property type="term" value="C:photosystem II reaction center"/>
    <property type="evidence" value="ECO:0007669"/>
    <property type="project" value="InterPro"/>
</dbReference>
<dbReference type="GO" id="GO:0015979">
    <property type="term" value="P:photosynthesis"/>
    <property type="evidence" value="ECO:0007669"/>
    <property type="project" value="UniProtKB-UniRule"/>
</dbReference>
<dbReference type="GO" id="GO:0042549">
    <property type="term" value="P:photosystem II stabilization"/>
    <property type="evidence" value="ECO:0007669"/>
    <property type="project" value="InterPro"/>
</dbReference>
<dbReference type="Gene3D" id="1.10.287.740">
    <property type="entry name" value="Photosystem II PsbZ, reaction centre"/>
    <property type="match status" value="1"/>
</dbReference>
<dbReference type="HAMAP" id="MF_00644">
    <property type="entry name" value="PSII_PsbZ"/>
    <property type="match status" value="1"/>
</dbReference>
<dbReference type="InterPro" id="IPR002644">
    <property type="entry name" value="PSII_PsbZ"/>
</dbReference>
<dbReference type="InterPro" id="IPR036512">
    <property type="entry name" value="PSII_PsbZ_sf"/>
</dbReference>
<dbReference type="NCBIfam" id="TIGR03043">
    <property type="entry name" value="PS_II_psbZ"/>
    <property type="match status" value="1"/>
</dbReference>
<dbReference type="PANTHER" id="PTHR34971">
    <property type="entry name" value="PHOTOSYSTEM II REACTION CENTER PROTEIN Z"/>
    <property type="match status" value="1"/>
</dbReference>
<dbReference type="PANTHER" id="PTHR34971:SF2">
    <property type="entry name" value="PHOTOSYSTEM II REACTION CENTER PROTEIN Z"/>
    <property type="match status" value="1"/>
</dbReference>
<dbReference type="Pfam" id="PF01737">
    <property type="entry name" value="Ycf9"/>
    <property type="match status" value="1"/>
</dbReference>
<dbReference type="SUPFAM" id="SSF161055">
    <property type="entry name" value="PsbZ-like"/>
    <property type="match status" value="1"/>
</dbReference>
<keyword id="KW-0002">3D-structure</keyword>
<keyword id="KW-0150">Chloroplast</keyword>
<keyword id="KW-0472">Membrane</keyword>
<keyword id="KW-0602">Photosynthesis</keyword>
<keyword id="KW-0604">Photosystem II</keyword>
<keyword id="KW-0934">Plastid</keyword>
<keyword id="KW-0674">Reaction center</keyword>
<keyword id="KW-1185">Reference proteome</keyword>
<keyword id="KW-0793">Thylakoid</keyword>
<keyword id="KW-0812">Transmembrane</keyword>
<keyword id="KW-1133">Transmembrane helix</keyword>
<reference key="1">
    <citation type="journal article" date="1998" name="Plant J.">
        <title>Inversions in the Chlamydomonas chloroplast genome suppress a petD 5' untranslated region deletion by creating functional chimeric mRNAs.</title>
        <authorList>
            <person name="Higgs D.C."/>
            <person name="Kuras R."/>
            <person name="Kindle K.L."/>
            <person name="Wollman F.A."/>
            <person name="Stern D.B."/>
        </authorList>
    </citation>
    <scope>NUCLEOTIDE SEQUENCE [GENOMIC DNA]</scope>
</reference>
<reference key="2">
    <citation type="journal article" date="2009" name="BMC Evol. Biol.">
        <title>Nucleotide diversity of the Chlamydomonas reinhardtii plastid genome: addressing the mutational-hazard hypothesis.</title>
        <authorList>
            <person name="Smith D.R."/>
            <person name="Lee R.W."/>
        </authorList>
    </citation>
    <scope>NUCLEOTIDE SEQUENCE [LARGE SCALE GENOMIC DNA]</scope>
    <source>
        <strain>CC-503</strain>
    </source>
</reference>
<reference key="3">
    <citation type="journal article" date="2002" name="Plant Cell">
        <title>The Chlamydomonas reinhardtii plastid chromosome: islands of genes in a sea of repeats.</title>
        <authorList>
            <person name="Maul J.E."/>
            <person name="Lilly J.W."/>
            <person name="Cui L."/>
            <person name="dePamphilis C.W."/>
            <person name="Miller W."/>
            <person name="Harris E.H."/>
            <person name="Stern D.B."/>
        </authorList>
    </citation>
    <scope>IDENTIFICATION</scope>
    <scope>COMPLETE PLASTID GENOME</scope>
</reference>
<reference key="4">
    <citation type="journal article" date="2001" name="Plant Cell">
        <title>The chloroplast gene ycf9 encodes a photosystem II (PSII) core subunit, PsbZ, that participates in PSII supramolecular architecture.</title>
        <authorList>
            <person name="Swiatek M."/>
            <person name="Kuras R."/>
            <person name="Sokolenko A."/>
            <person name="Higgs D."/>
            <person name="Olive J."/>
            <person name="Cinque G."/>
            <person name="Mueller B."/>
            <person name="Eichacker L.A."/>
            <person name="Stern D.B."/>
            <person name="Bassi R."/>
            <person name="Herrmann R.G."/>
            <person name="Wollman F.-A."/>
        </authorList>
    </citation>
    <scope>FUNCTION</scope>
    <scope>SUBUNIT</scope>
    <scope>SUBCELLULAR LOCATION</scope>
    <scope>OPERON STRUCTURE</scope>
    <scope>DISRUPTION PHENOTYPE</scope>
    <source>
        <strain>CC-400</strain>
    </source>
</reference>
<name>PSBZ_CHLRE</name>
<protein>
    <recommendedName>
        <fullName evidence="1">Photosystem II reaction center protein Z</fullName>
        <shortName evidence="1">PSII-Z</shortName>
    </recommendedName>
</protein>
<evidence type="ECO:0000255" key="1">
    <source>
        <dbReference type="HAMAP-Rule" id="MF_00644"/>
    </source>
</evidence>
<evidence type="ECO:0000269" key="2">
    <source>
    </source>
</evidence>
<evidence type="ECO:0000303" key="3">
    <source>
    </source>
</evidence>
<evidence type="ECO:0007829" key="4">
    <source>
        <dbReference type="PDB" id="8KDE"/>
    </source>
</evidence>
<gene>
    <name evidence="1 3" type="primary">psbZ</name>
    <name evidence="3" type="synonym">ycf9</name>
</gene>
<organism>
    <name type="scientific">Chlamydomonas reinhardtii</name>
    <name type="common">Chlamydomonas smithii</name>
    <dbReference type="NCBI Taxonomy" id="3055"/>
    <lineage>
        <taxon>Eukaryota</taxon>
        <taxon>Viridiplantae</taxon>
        <taxon>Chlorophyta</taxon>
        <taxon>core chlorophytes</taxon>
        <taxon>Chlorophyceae</taxon>
        <taxon>CS clade</taxon>
        <taxon>Chlamydomonadales</taxon>
        <taxon>Chlamydomonadaceae</taxon>
        <taxon>Chlamydomonas</taxon>
    </lineage>
</organism>
<feature type="chain" id="PRO_0000217693" description="Photosystem II reaction center protein Z">
    <location>
        <begin position="1"/>
        <end position="62"/>
    </location>
</feature>
<feature type="transmembrane region" description="Helical" evidence="1">
    <location>
        <begin position="8"/>
        <end position="28"/>
    </location>
</feature>
<feature type="transmembrane region" description="Helical" evidence="1">
    <location>
        <begin position="41"/>
        <end position="61"/>
    </location>
</feature>
<feature type="helix" evidence="4">
    <location>
        <begin position="2"/>
        <end position="28"/>
    </location>
</feature>
<feature type="turn" evidence="4">
    <location>
        <begin position="33"/>
        <end position="35"/>
    </location>
</feature>
<feature type="helix" evidence="4">
    <location>
        <begin position="37"/>
        <end position="59"/>
    </location>
</feature>
<comment type="function">
    <text evidence="1 2">Controls the interaction of photosystem II (PSII) cores with the light-harvesting antenna, aiding in the dissipation of excitation energy within PSII (PubMed:11402165). PSII is a light-driven water plastoquinone oxidoreductase, using light energy to abstract electrons from H(2)O, generating a proton gradient subsequently used for ATP formation (By similarity).</text>
</comment>
<comment type="subunit">
    <text evidence="1">PSII is composed of 1 copy each of membrane proteins PsbA, PsbB, PsbC, PsbD, PsbE, PsbF, PsbH, PsbI, PsbJ, PsbK, PsbL, PsbM, PsbT, PsbY, PsbZ, Psb30/Ycf12, at least 3 peripheral proteins of the oxygen-evolving complex and a large number of cofactors. It forms dimeric complexes.</text>
</comment>
<comment type="subcellular location">
    <subcellularLocation>
        <location evidence="1 2">Plastid</location>
        <location evidence="1 2">Chloroplast thylakoid membrane</location>
        <topology evidence="1">Multi-pass membrane protein</topology>
    </subcellularLocation>
    <text evidence="2">Associated with the photosystem II complex.</text>
</comment>
<comment type="induction">
    <text evidence="2">Transcribed as a monocistronic and dicistronic transcript (with downstream psbM).</text>
</comment>
<comment type="disruption phenotype">
    <text evidence="2">Not essential, grows like wild-type at 25 and 17 degrees Celsius and from 20-200 umol photons/m(2)/s. Loss of PSII-light harvesting supercomplexes. Loss of PSII-light harvesting supercomplexes without a decrease of major antenna proteins, at 17 degrees Celsius and 100 umol photons/m(2)/s loss of minor antenna chlorophyll a-b binding proteins CP26 (Lhcb5), decreased levels of CP29 (Lhcb4), less extreme pheotype at 25 degrees Celsius and the same light. Altered phosphorylation state of PSII and LHCII, impaired non-photochemical energy quenching.</text>
</comment>
<comment type="similarity">
    <text evidence="1">Belongs to the PsbZ family.</text>
</comment>
<sequence length="62" mass="6565">MTSILQVALLALIFVSFALVVGVPVVFATPNGWTDNKGAVFSGLSLWLLLVFVVGILNSFVV</sequence>
<accession>P92276</accession>
<accession>B7U1G9</accession>
<geneLocation type="chloroplast"/>
<proteinExistence type="evidence at protein level"/>